<feature type="chain" id="PRO_1000146455" description="Small ribosomal subunit protein uS9">
    <location>
        <begin position="1"/>
        <end position="130"/>
    </location>
</feature>
<comment type="similarity">
    <text evidence="1">Belongs to the universal ribosomal protein uS9 family.</text>
</comment>
<accession>B7N102</accession>
<evidence type="ECO:0000255" key="1">
    <source>
        <dbReference type="HAMAP-Rule" id="MF_00532"/>
    </source>
</evidence>
<evidence type="ECO:0000305" key="2"/>
<keyword id="KW-0687">Ribonucleoprotein</keyword>
<keyword id="KW-0689">Ribosomal protein</keyword>
<dbReference type="EMBL" id="CU928162">
    <property type="protein sequence ID" value="CAR10020.2"/>
    <property type="molecule type" value="Genomic_DNA"/>
</dbReference>
<dbReference type="RefSeq" id="WP_000829818.1">
    <property type="nucleotide sequence ID" value="NC_011745.1"/>
</dbReference>
<dbReference type="SMR" id="B7N102"/>
<dbReference type="GeneID" id="98390344"/>
<dbReference type="KEGG" id="ecq:ECED1_3880"/>
<dbReference type="HOGENOM" id="CLU_046483_2_1_6"/>
<dbReference type="Proteomes" id="UP000000748">
    <property type="component" value="Chromosome"/>
</dbReference>
<dbReference type="GO" id="GO:0022627">
    <property type="term" value="C:cytosolic small ribosomal subunit"/>
    <property type="evidence" value="ECO:0007669"/>
    <property type="project" value="TreeGrafter"/>
</dbReference>
<dbReference type="GO" id="GO:0003723">
    <property type="term" value="F:RNA binding"/>
    <property type="evidence" value="ECO:0007669"/>
    <property type="project" value="TreeGrafter"/>
</dbReference>
<dbReference type="GO" id="GO:0003735">
    <property type="term" value="F:structural constituent of ribosome"/>
    <property type="evidence" value="ECO:0007669"/>
    <property type="project" value="InterPro"/>
</dbReference>
<dbReference type="GO" id="GO:0006412">
    <property type="term" value="P:translation"/>
    <property type="evidence" value="ECO:0007669"/>
    <property type="project" value="UniProtKB-UniRule"/>
</dbReference>
<dbReference type="FunFam" id="3.30.230.10:FF:000001">
    <property type="entry name" value="30S ribosomal protein S9"/>
    <property type="match status" value="1"/>
</dbReference>
<dbReference type="Gene3D" id="3.30.230.10">
    <property type="match status" value="1"/>
</dbReference>
<dbReference type="HAMAP" id="MF_00532_B">
    <property type="entry name" value="Ribosomal_uS9_B"/>
    <property type="match status" value="1"/>
</dbReference>
<dbReference type="InterPro" id="IPR020568">
    <property type="entry name" value="Ribosomal_Su5_D2-typ_SF"/>
</dbReference>
<dbReference type="InterPro" id="IPR000754">
    <property type="entry name" value="Ribosomal_uS9"/>
</dbReference>
<dbReference type="InterPro" id="IPR023035">
    <property type="entry name" value="Ribosomal_uS9_bac/plastid"/>
</dbReference>
<dbReference type="InterPro" id="IPR020574">
    <property type="entry name" value="Ribosomal_uS9_CS"/>
</dbReference>
<dbReference type="InterPro" id="IPR014721">
    <property type="entry name" value="Ribsml_uS5_D2-typ_fold_subgr"/>
</dbReference>
<dbReference type="NCBIfam" id="NF001099">
    <property type="entry name" value="PRK00132.1"/>
    <property type="match status" value="1"/>
</dbReference>
<dbReference type="PANTHER" id="PTHR21569">
    <property type="entry name" value="RIBOSOMAL PROTEIN S9"/>
    <property type="match status" value="1"/>
</dbReference>
<dbReference type="PANTHER" id="PTHR21569:SF1">
    <property type="entry name" value="SMALL RIBOSOMAL SUBUNIT PROTEIN US9M"/>
    <property type="match status" value="1"/>
</dbReference>
<dbReference type="Pfam" id="PF00380">
    <property type="entry name" value="Ribosomal_S9"/>
    <property type="match status" value="1"/>
</dbReference>
<dbReference type="SUPFAM" id="SSF54211">
    <property type="entry name" value="Ribosomal protein S5 domain 2-like"/>
    <property type="match status" value="1"/>
</dbReference>
<dbReference type="PROSITE" id="PS00360">
    <property type="entry name" value="RIBOSOMAL_S9"/>
    <property type="match status" value="1"/>
</dbReference>
<protein>
    <recommendedName>
        <fullName evidence="1">Small ribosomal subunit protein uS9</fullName>
    </recommendedName>
    <alternativeName>
        <fullName evidence="2">30S ribosomal protein S9</fullName>
    </alternativeName>
</protein>
<name>RS9_ECO81</name>
<gene>
    <name evidence="1" type="primary">rpsI</name>
    <name type="ordered locus">ECED1_3880</name>
</gene>
<sequence length="130" mass="14856">MAENQYYGTGRRKSSAARVFIKPGNGKIVINQRSLEQYFGRETARMVVRQPLELVDMVEKLDLYITVKGGGISGQAGAIRHGITRALMEYDESLRSELRKAGFVTRDARQVERKKVGLRKARRRPQFSKR</sequence>
<proteinExistence type="inferred from homology"/>
<reference key="1">
    <citation type="journal article" date="2009" name="PLoS Genet.">
        <title>Organised genome dynamics in the Escherichia coli species results in highly diverse adaptive paths.</title>
        <authorList>
            <person name="Touchon M."/>
            <person name="Hoede C."/>
            <person name="Tenaillon O."/>
            <person name="Barbe V."/>
            <person name="Baeriswyl S."/>
            <person name="Bidet P."/>
            <person name="Bingen E."/>
            <person name="Bonacorsi S."/>
            <person name="Bouchier C."/>
            <person name="Bouvet O."/>
            <person name="Calteau A."/>
            <person name="Chiapello H."/>
            <person name="Clermont O."/>
            <person name="Cruveiller S."/>
            <person name="Danchin A."/>
            <person name="Diard M."/>
            <person name="Dossat C."/>
            <person name="Karoui M.E."/>
            <person name="Frapy E."/>
            <person name="Garry L."/>
            <person name="Ghigo J.M."/>
            <person name="Gilles A.M."/>
            <person name="Johnson J."/>
            <person name="Le Bouguenec C."/>
            <person name="Lescat M."/>
            <person name="Mangenot S."/>
            <person name="Martinez-Jehanne V."/>
            <person name="Matic I."/>
            <person name="Nassif X."/>
            <person name="Oztas S."/>
            <person name="Petit M.A."/>
            <person name="Pichon C."/>
            <person name="Rouy Z."/>
            <person name="Ruf C.S."/>
            <person name="Schneider D."/>
            <person name="Tourret J."/>
            <person name="Vacherie B."/>
            <person name="Vallenet D."/>
            <person name="Medigue C."/>
            <person name="Rocha E.P.C."/>
            <person name="Denamur E."/>
        </authorList>
    </citation>
    <scope>NUCLEOTIDE SEQUENCE [LARGE SCALE GENOMIC DNA]</scope>
    <source>
        <strain>ED1a</strain>
    </source>
</reference>
<organism>
    <name type="scientific">Escherichia coli O81 (strain ED1a)</name>
    <dbReference type="NCBI Taxonomy" id="585397"/>
    <lineage>
        <taxon>Bacteria</taxon>
        <taxon>Pseudomonadati</taxon>
        <taxon>Pseudomonadota</taxon>
        <taxon>Gammaproteobacteria</taxon>
        <taxon>Enterobacterales</taxon>
        <taxon>Enterobacteriaceae</taxon>
        <taxon>Escherichia</taxon>
    </lineage>
</organism>